<organism>
    <name type="scientific">Xylella fastidiosa (strain M12)</name>
    <dbReference type="NCBI Taxonomy" id="405440"/>
    <lineage>
        <taxon>Bacteria</taxon>
        <taxon>Pseudomonadati</taxon>
        <taxon>Pseudomonadota</taxon>
        <taxon>Gammaproteobacteria</taxon>
        <taxon>Lysobacterales</taxon>
        <taxon>Lysobacteraceae</taxon>
        <taxon>Xylella</taxon>
    </lineage>
</organism>
<dbReference type="EC" id="1.3.5.2" evidence="1"/>
<dbReference type="EMBL" id="CP000941">
    <property type="protein sequence ID" value="ACA12999.1"/>
    <property type="molecule type" value="Genomic_DNA"/>
</dbReference>
<dbReference type="RefSeq" id="WP_004084644.1">
    <property type="nucleotide sequence ID" value="NC_010513.1"/>
</dbReference>
<dbReference type="SMR" id="B0U5I1"/>
<dbReference type="KEGG" id="xfm:Xfasm12_2143"/>
<dbReference type="HOGENOM" id="CLU_013640_2_0_6"/>
<dbReference type="UniPathway" id="UPA00070">
    <property type="reaction ID" value="UER00946"/>
</dbReference>
<dbReference type="GO" id="GO:0005737">
    <property type="term" value="C:cytoplasm"/>
    <property type="evidence" value="ECO:0007669"/>
    <property type="project" value="InterPro"/>
</dbReference>
<dbReference type="GO" id="GO:0005886">
    <property type="term" value="C:plasma membrane"/>
    <property type="evidence" value="ECO:0007669"/>
    <property type="project" value="UniProtKB-SubCell"/>
</dbReference>
<dbReference type="GO" id="GO:0106430">
    <property type="term" value="F:dihydroorotate dehydrogenase (quinone) activity"/>
    <property type="evidence" value="ECO:0007669"/>
    <property type="project" value="UniProtKB-EC"/>
</dbReference>
<dbReference type="GO" id="GO:0006207">
    <property type="term" value="P:'de novo' pyrimidine nucleobase biosynthetic process"/>
    <property type="evidence" value="ECO:0007669"/>
    <property type="project" value="InterPro"/>
</dbReference>
<dbReference type="GO" id="GO:0044205">
    <property type="term" value="P:'de novo' UMP biosynthetic process"/>
    <property type="evidence" value="ECO:0007669"/>
    <property type="project" value="UniProtKB-UniRule"/>
</dbReference>
<dbReference type="CDD" id="cd04738">
    <property type="entry name" value="DHOD_2_like"/>
    <property type="match status" value="1"/>
</dbReference>
<dbReference type="Gene3D" id="3.20.20.70">
    <property type="entry name" value="Aldolase class I"/>
    <property type="match status" value="1"/>
</dbReference>
<dbReference type="HAMAP" id="MF_00225">
    <property type="entry name" value="DHO_dh_type2"/>
    <property type="match status" value="1"/>
</dbReference>
<dbReference type="InterPro" id="IPR013785">
    <property type="entry name" value="Aldolase_TIM"/>
</dbReference>
<dbReference type="InterPro" id="IPR050074">
    <property type="entry name" value="DHO_dehydrogenase"/>
</dbReference>
<dbReference type="InterPro" id="IPR012135">
    <property type="entry name" value="Dihydroorotate_DH_1_2"/>
</dbReference>
<dbReference type="InterPro" id="IPR005719">
    <property type="entry name" value="Dihydroorotate_DH_2"/>
</dbReference>
<dbReference type="InterPro" id="IPR005720">
    <property type="entry name" value="Dihydroorotate_DH_cat"/>
</dbReference>
<dbReference type="InterPro" id="IPR001295">
    <property type="entry name" value="Dihydroorotate_DH_CS"/>
</dbReference>
<dbReference type="NCBIfam" id="NF003645">
    <property type="entry name" value="PRK05286.1-2"/>
    <property type="match status" value="1"/>
</dbReference>
<dbReference type="NCBIfam" id="NF003646">
    <property type="entry name" value="PRK05286.1-4"/>
    <property type="match status" value="1"/>
</dbReference>
<dbReference type="NCBIfam" id="NF003652">
    <property type="entry name" value="PRK05286.2-5"/>
    <property type="match status" value="1"/>
</dbReference>
<dbReference type="NCBIfam" id="TIGR01036">
    <property type="entry name" value="pyrD_sub2"/>
    <property type="match status" value="1"/>
</dbReference>
<dbReference type="PANTHER" id="PTHR48109:SF4">
    <property type="entry name" value="DIHYDROOROTATE DEHYDROGENASE (QUINONE), MITOCHONDRIAL"/>
    <property type="match status" value="1"/>
</dbReference>
<dbReference type="PANTHER" id="PTHR48109">
    <property type="entry name" value="DIHYDROOROTATE DEHYDROGENASE (QUINONE), MITOCHONDRIAL-RELATED"/>
    <property type="match status" value="1"/>
</dbReference>
<dbReference type="Pfam" id="PF01180">
    <property type="entry name" value="DHO_dh"/>
    <property type="match status" value="1"/>
</dbReference>
<dbReference type="PIRSF" id="PIRSF000164">
    <property type="entry name" value="DHO_oxidase"/>
    <property type="match status" value="1"/>
</dbReference>
<dbReference type="SUPFAM" id="SSF51395">
    <property type="entry name" value="FMN-linked oxidoreductases"/>
    <property type="match status" value="1"/>
</dbReference>
<dbReference type="PROSITE" id="PS00911">
    <property type="entry name" value="DHODEHASE_1"/>
    <property type="match status" value="1"/>
</dbReference>
<name>PYRD_XYLFM</name>
<comment type="function">
    <text evidence="1">Catalyzes the conversion of dihydroorotate to orotate with quinone as electron acceptor.</text>
</comment>
<comment type="catalytic activity">
    <reaction evidence="1">
        <text>(S)-dihydroorotate + a quinone = orotate + a quinol</text>
        <dbReference type="Rhea" id="RHEA:30187"/>
        <dbReference type="ChEBI" id="CHEBI:24646"/>
        <dbReference type="ChEBI" id="CHEBI:30839"/>
        <dbReference type="ChEBI" id="CHEBI:30864"/>
        <dbReference type="ChEBI" id="CHEBI:132124"/>
        <dbReference type="EC" id="1.3.5.2"/>
    </reaction>
</comment>
<comment type="cofactor">
    <cofactor evidence="1">
        <name>FMN</name>
        <dbReference type="ChEBI" id="CHEBI:58210"/>
    </cofactor>
    <text evidence="1">Binds 1 FMN per subunit.</text>
</comment>
<comment type="pathway">
    <text evidence="1">Pyrimidine metabolism; UMP biosynthesis via de novo pathway; orotate from (S)-dihydroorotate (quinone route): step 1/1.</text>
</comment>
<comment type="subunit">
    <text evidence="1">Monomer.</text>
</comment>
<comment type="subcellular location">
    <subcellularLocation>
        <location evidence="1">Cell membrane</location>
        <topology evidence="1">Peripheral membrane protein</topology>
    </subcellularLocation>
</comment>
<comment type="similarity">
    <text evidence="1">Belongs to the dihydroorotate dehydrogenase family. Type 2 subfamily.</text>
</comment>
<keyword id="KW-1003">Cell membrane</keyword>
<keyword id="KW-0285">Flavoprotein</keyword>
<keyword id="KW-0288">FMN</keyword>
<keyword id="KW-0472">Membrane</keyword>
<keyword id="KW-0560">Oxidoreductase</keyword>
<keyword id="KW-0665">Pyrimidine biosynthesis</keyword>
<feature type="chain" id="PRO_1000100299" description="Dihydroorotate dehydrogenase (quinone)">
    <location>
        <begin position="1"/>
        <end position="351"/>
    </location>
</feature>
<feature type="active site" description="Nucleophile" evidence="1">
    <location>
        <position position="175"/>
    </location>
</feature>
<feature type="binding site" evidence="1">
    <location>
        <begin position="61"/>
        <end position="65"/>
    </location>
    <ligand>
        <name>FMN</name>
        <dbReference type="ChEBI" id="CHEBI:58210"/>
    </ligand>
</feature>
<feature type="binding site" evidence="1">
    <location>
        <position position="65"/>
    </location>
    <ligand>
        <name>substrate</name>
    </ligand>
</feature>
<feature type="binding site" evidence="1">
    <location>
        <position position="85"/>
    </location>
    <ligand>
        <name>FMN</name>
        <dbReference type="ChEBI" id="CHEBI:58210"/>
    </ligand>
</feature>
<feature type="binding site" evidence="1">
    <location>
        <begin position="110"/>
        <end position="114"/>
    </location>
    <ligand>
        <name>substrate</name>
    </ligand>
</feature>
<feature type="binding site" evidence="1">
    <location>
        <position position="139"/>
    </location>
    <ligand>
        <name>FMN</name>
        <dbReference type="ChEBI" id="CHEBI:58210"/>
    </ligand>
</feature>
<feature type="binding site" evidence="1">
    <location>
        <position position="172"/>
    </location>
    <ligand>
        <name>FMN</name>
        <dbReference type="ChEBI" id="CHEBI:58210"/>
    </ligand>
</feature>
<feature type="binding site" evidence="1">
    <location>
        <position position="172"/>
    </location>
    <ligand>
        <name>substrate</name>
    </ligand>
</feature>
<feature type="binding site" evidence="1">
    <location>
        <position position="177"/>
    </location>
    <ligand>
        <name>substrate</name>
    </ligand>
</feature>
<feature type="binding site" evidence="1">
    <location>
        <position position="217"/>
    </location>
    <ligand>
        <name>FMN</name>
        <dbReference type="ChEBI" id="CHEBI:58210"/>
    </ligand>
</feature>
<feature type="binding site" evidence="1">
    <location>
        <position position="245"/>
    </location>
    <ligand>
        <name>FMN</name>
        <dbReference type="ChEBI" id="CHEBI:58210"/>
    </ligand>
</feature>
<feature type="binding site" evidence="1">
    <location>
        <begin position="246"/>
        <end position="247"/>
    </location>
    <ligand>
        <name>substrate</name>
    </ligand>
</feature>
<feature type="binding site" evidence="1">
    <location>
        <position position="268"/>
    </location>
    <ligand>
        <name>FMN</name>
        <dbReference type="ChEBI" id="CHEBI:58210"/>
    </ligand>
</feature>
<feature type="binding site" evidence="1">
    <location>
        <position position="297"/>
    </location>
    <ligand>
        <name>FMN</name>
        <dbReference type="ChEBI" id="CHEBI:58210"/>
    </ligand>
</feature>
<feature type="binding site" evidence="1">
    <location>
        <begin position="318"/>
        <end position="319"/>
    </location>
    <ligand>
        <name>FMN</name>
        <dbReference type="ChEBI" id="CHEBI:58210"/>
    </ligand>
</feature>
<evidence type="ECO:0000255" key="1">
    <source>
        <dbReference type="HAMAP-Rule" id="MF_00225"/>
    </source>
</evidence>
<proteinExistence type="inferred from homology"/>
<protein>
    <recommendedName>
        <fullName evidence="1">Dihydroorotate dehydrogenase (quinone)</fullName>
        <ecNumber evidence="1">1.3.5.2</ecNumber>
    </recommendedName>
    <alternativeName>
        <fullName evidence="1">DHOdehase</fullName>
        <shortName evidence="1">DHOD</shortName>
        <shortName evidence="1">DHODase</shortName>
    </alternativeName>
    <alternativeName>
        <fullName evidence="1">Dihydroorotate oxidase</fullName>
    </alternativeName>
</protein>
<gene>
    <name evidence="1" type="primary">pyrD</name>
    <name type="ordered locus">Xfasm12_2143</name>
</gene>
<accession>B0U5I1</accession>
<sequence>MYSLFRPLLFTCDTERAHDISLRTLDIAYHSGALPLLTRHTRPLPTTAFGLNFPNPVGLAAGLDKNGTHIDALFALGFGFIEIGTTTPRPQAGNPKPRLFRLTQQQAVINRMGFNNLGVDALVRNVAGARRRNGPLGINIGKNKDTPNEQASNDYRYCLERVYALADYVTINLSSPNTAGLRALQEEQTLRRLIGELRETQETLAAKHGRHVPMLIKMAPDLSDSDIDAAARVLNEMSVDGVIATNTTVTRPLLRQHPLASEAGGLSGAPLLGQSTLVLRRLRTHLPETIDLIGVGGICCGADAGAKMAAGASLVQCYTGLIFKGPQLVGECVEAIRRRLEASSSGRENTQ</sequence>
<reference key="1">
    <citation type="journal article" date="2010" name="J. Bacteriol.">
        <title>Whole genome sequences of two Xylella fastidiosa strains (M12 and M23) causing almond leaf scorch disease in California.</title>
        <authorList>
            <person name="Chen J."/>
            <person name="Xie G."/>
            <person name="Han S."/>
            <person name="Chertkov O."/>
            <person name="Sims D."/>
            <person name="Civerolo E.L."/>
        </authorList>
    </citation>
    <scope>NUCLEOTIDE SEQUENCE [LARGE SCALE GENOMIC DNA]</scope>
    <source>
        <strain>M12</strain>
    </source>
</reference>